<name>RBLL_BORBR</name>
<organism>
    <name type="scientific">Bordetella bronchiseptica (strain ATCC BAA-588 / NCTC 13252 / RB50)</name>
    <name type="common">Alcaligenes bronchisepticus</name>
    <dbReference type="NCBI Taxonomy" id="257310"/>
    <lineage>
        <taxon>Bacteria</taxon>
        <taxon>Pseudomonadati</taxon>
        <taxon>Pseudomonadota</taxon>
        <taxon>Betaproteobacteria</taxon>
        <taxon>Burkholderiales</taxon>
        <taxon>Alcaligenaceae</taxon>
        <taxon>Bordetella</taxon>
    </lineage>
</organism>
<sequence length="423" mass="45188">MSDRFEATYLIETPHDVASVAQELAGEQSTATSSRMPGETDALIRDFGARVEHIEALPPAEAPSLPVAHTLGQRVHRARLTLSWPLHNIGDSLPMLLTTLLGNQTGMRRLSGIRLERVAMPQSFIAAQPRPAFGIAGTRRLTGVQGRPLIGSIVKPNIGLAPEQTAAMARQLAEGGVDFIKDDELLANPPYSPVARRAALVLRALDEAAQRTGRRTMYAVNITDGLDEMRRHHDAVVQAGGTCIMVNLNSVGLSALLALRRHSQLPIHGHRAGWAMMTRCPALGMEFQPYQMLHRLAGVDHLHVSGLGGKFWEHADSVLQAAHECLTPLDTQAGAADDRALPVFSGGSTIFDVAPTYQGIGTADLIFASGGGIFGHPDGLAAGCASLRQAWEAAIAGQELRAYAQSRPELAAALARGKPVRKA</sequence>
<protein>
    <recommendedName>
        <fullName>Uncharacterized ribulose bisphosphate carboxylase-like protein</fullName>
        <shortName>RuBisCO-like protein</shortName>
    </recommendedName>
</protein>
<comment type="function">
    <text evidence="1">May be involved in sulfur metabolism and oxidative stress response. Does not show RuBisCO activity (By similarity).</text>
</comment>
<comment type="cofactor">
    <cofactor evidence="1">
        <name>Mg(2+)</name>
        <dbReference type="ChEBI" id="CHEBI:18420"/>
    </cofactor>
    <text evidence="1">Binds 1 Mg(2+) ion per subunit.</text>
</comment>
<comment type="similarity">
    <text evidence="3">Belongs to the RuBisCO large chain family. Type IV subfamily.</text>
</comment>
<reference key="1">
    <citation type="journal article" date="2003" name="Nat. Genet.">
        <title>Comparative analysis of the genome sequences of Bordetella pertussis, Bordetella parapertussis and Bordetella bronchiseptica.</title>
        <authorList>
            <person name="Parkhill J."/>
            <person name="Sebaihia M."/>
            <person name="Preston A."/>
            <person name="Murphy L.D."/>
            <person name="Thomson N.R."/>
            <person name="Harris D.E."/>
            <person name="Holden M.T.G."/>
            <person name="Churcher C.M."/>
            <person name="Bentley S.D."/>
            <person name="Mungall K.L."/>
            <person name="Cerdeno-Tarraga A.-M."/>
            <person name="Temple L."/>
            <person name="James K.D."/>
            <person name="Harris B."/>
            <person name="Quail M.A."/>
            <person name="Achtman M."/>
            <person name="Atkin R."/>
            <person name="Baker S."/>
            <person name="Basham D."/>
            <person name="Bason N."/>
            <person name="Cherevach I."/>
            <person name="Chillingworth T."/>
            <person name="Collins M."/>
            <person name="Cronin A."/>
            <person name="Davis P."/>
            <person name="Doggett J."/>
            <person name="Feltwell T."/>
            <person name="Goble A."/>
            <person name="Hamlin N."/>
            <person name="Hauser H."/>
            <person name="Holroyd S."/>
            <person name="Jagels K."/>
            <person name="Leather S."/>
            <person name="Moule S."/>
            <person name="Norberczak H."/>
            <person name="O'Neil S."/>
            <person name="Ormond D."/>
            <person name="Price C."/>
            <person name="Rabbinowitsch E."/>
            <person name="Rutter S."/>
            <person name="Sanders M."/>
            <person name="Saunders D."/>
            <person name="Seeger K."/>
            <person name="Sharp S."/>
            <person name="Simmonds M."/>
            <person name="Skelton J."/>
            <person name="Squares R."/>
            <person name="Squares S."/>
            <person name="Stevens K."/>
            <person name="Unwin L."/>
            <person name="Whitehead S."/>
            <person name="Barrell B.G."/>
            <person name="Maskell D.J."/>
        </authorList>
    </citation>
    <scope>NUCLEOTIDE SEQUENCE [LARGE SCALE GENOMIC DNA]</scope>
    <source>
        <strain>ATCC BAA-588 / NCTC 13252 / RB50</strain>
    </source>
</reference>
<evidence type="ECO:0000250" key="1"/>
<evidence type="ECO:0000255" key="2">
    <source>
        <dbReference type="PROSITE-ProRule" id="PRU10114"/>
    </source>
</evidence>
<evidence type="ECO:0000305" key="3"/>
<feature type="chain" id="PRO_0000062684" description="Uncharacterized ribulose bisphosphate carboxylase-like protein">
    <location>
        <begin position="1"/>
        <end position="423"/>
    </location>
</feature>
<feature type="binding site" description="via carbamate group" evidence="2">
    <location>
        <position position="181"/>
    </location>
    <ligand>
        <name>Mg(2+)</name>
        <dbReference type="ChEBI" id="CHEBI:18420"/>
    </ligand>
</feature>
<feature type="binding site" evidence="2">
    <location>
        <position position="183"/>
    </location>
    <ligand>
        <name>Mg(2+)</name>
        <dbReference type="ChEBI" id="CHEBI:18420"/>
    </ligand>
</feature>
<feature type="binding site" evidence="2">
    <location>
        <position position="184"/>
    </location>
    <ligand>
        <name>Mg(2+)</name>
        <dbReference type="ChEBI" id="CHEBI:18420"/>
    </ligand>
</feature>
<feature type="modified residue" description="N6-carboxylysine" evidence="2">
    <location>
        <position position="181"/>
    </location>
</feature>
<keyword id="KW-0460">Magnesium</keyword>
<keyword id="KW-0479">Metal-binding</keyword>
<gene>
    <name type="ordered locus">BB1035</name>
</gene>
<dbReference type="EMBL" id="BX640440">
    <property type="protein sequence ID" value="CAE31534.1"/>
    <property type="molecule type" value="Genomic_DNA"/>
</dbReference>
<dbReference type="RefSeq" id="WP_010926029.1">
    <property type="nucleotide sequence ID" value="NC_002927.3"/>
</dbReference>
<dbReference type="SMR" id="Q7WNK2"/>
<dbReference type="KEGG" id="bbr:BB1035"/>
<dbReference type="eggNOG" id="COG1850">
    <property type="taxonomic scope" value="Bacteria"/>
</dbReference>
<dbReference type="HOGENOM" id="CLU_031450_3_0_4"/>
<dbReference type="Proteomes" id="UP000001027">
    <property type="component" value="Chromosome"/>
</dbReference>
<dbReference type="GO" id="GO:0000287">
    <property type="term" value="F:magnesium ion binding"/>
    <property type="evidence" value="ECO:0007669"/>
    <property type="project" value="InterPro"/>
</dbReference>
<dbReference type="GO" id="GO:0016984">
    <property type="term" value="F:ribulose-bisphosphate carboxylase activity"/>
    <property type="evidence" value="ECO:0007669"/>
    <property type="project" value="InterPro"/>
</dbReference>
<dbReference type="GO" id="GO:0015977">
    <property type="term" value="P:carbon fixation"/>
    <property type="evidence" value="ECO:0007669"/>
    <property type="project" value="InterPro"/>
</dbReference>
<dbReference type="CDD" id="cd08207">
    <property type="entry name" value="RLP_NonPhot"/>
    <property type="match status" value="1"/>
</dbReference>
<dbReference type="Gene3D" id="3.20.20.110">
    <property type="entry name" value="Ribulose bisphosphate carboxylase, large subunit, C-terminal domain"/>
    <property type="match status" value="1"/>
</dbReference>
<dbReference type="Gene3D" id="3.30.70.150">
    <property type="entry name" value="RuBisCO large subunit, N-terminal domain"/>
    <property type="match status" value="1"/>
</dbReference>
<dbReference type="InterPro" id="IPR033966">
    <property type="entry name" value="RuBisCO"/>
</dbReference>
<dbReference type="InterPro" id="IPR020878">
    <property type="entry name" value="RuBisCo_large_chain_AS"/>
</dbReference>
<dbReference type="InterPro" id="IPR000685">
    <property type="entry name" value="RuBisCO_lsu_C"/>
</dbReference>
<dbReference type="InterPro" id="IPR036376">
    <property type="entry name" value="RuBisCO_lsu_C_sf"/>
</dbReference>
<dbReference type="InterPro" id="IPR017443">
    <property type="entry name" value="RuBisCO_lsu_fd_N"/>
</dbReference>
<dbReference type="InterPro" id="IPR036422">
    <property type="entry name" value="RuBisCO_lsu_N_sf"/>
</dbReference>
<dbReference type="PANTHER" id="PTHR42704">
    <property type="entry name" value="RIBULOSE BISPHOSPHATE CARBOXYLASE"/>
    <property type="match status" value="1"/>
</dbReference>
<dbReference type="PANTHER" id="PTHR42704:SF17">
    <property type="entry name" value="RIBULOSE BISPHOSPHATE CARBOXYLASE LARGE CHAIN"/>
    <property type="match status" value="1"/>
</dbReference>
<dbReference type="Pfam" id="PF00016">
    <property type="entry name" value="RuBisCO_large"/>
    <property type="match status" value="1"/>
</dbReference>
<dbReference type="Pfam" id="PF02788">
    <property type="entry name" value="RuBisCO_large_N"/>
    <property type="match status" value="1"/>
</dbReference>
<dbReference type="SFLD" id="SFLDS00014">
    <property type="entry name" value="RuBisCO"/>
    <property type="match status" value="1"/>
</dbReference>
<dbReference type="SFLD" id="SFLDG00301">
    <property type="entry name" value="RuBisCO-like_proteins"/>
    <property type="match status" value="1"/>
</dbReference>
<dbReference type="SUPFAM" id="SSF51649">
    <property type="entry name" value="RuBisCo, C-terminal domain"/>
    <property type="match status" value="1"/>
</dbReference>
<dbReference type="SUPFAM" id="SSF54966">
    <property type="entry name" value="RuBisCO, large subunit, small (N-terminal) domain"/>
    <property type="match status" value="1"/>
</dbReference>
<dbReference type="PROSITE" id="PS00157">
    <property type="entry name" value="RUBISCO_LARGE"/>
    <property type="match status" value="1"/>
</dbReference>
<proteinExistence type="inferred from homology"/>
<accession>Q7WNK2</accession>